<comment type="subcellular location">
    <subcellularLocation>
        <location evidence="1">Bud neck</location>
    </subcellularLocation>
</comment>
<comment type="similarity">
    <text evidence="3">Belongs to the AIM44 family.</text>
</comment>
<organism>
    <name type="scientific">Zygosaccharomyces rouxii (strain ATCC 2623 / CBS 732 / NBRC 1130 / NCYC 568 / NRRL Y-229)</name>
    <dbReference type="NCBI Taxonomy" id="559307"/>
    <lineage>
        <taxon>Eukaryota</taxon>
        <taxon>Fungi</taxon>
        <taxon>Dikarya</taxon>
        <taxon>Ascomycota</taxon>
        <taxon>Saccharomycotina</taxon>
        <taxon>Saccharomycetes</taxon>
        <taxon>Saccharomycetales</taxon>
        <taxon>Saccharomycetaceae</taxon>
        <taxon>Zygosaccharomyces</taxon>
    </lineage>
</organism>
<reference key="1">
    <citation type="journal article" date="2009" name="Genome Res.">
        <title>Comparative genomics of protoploid Saccharomycetaceae.</title>
        <authorList>
            <consortium name="The Genolevures Consortium"/>
            <person name="Souciet J.-L."/>
            <person name="Dujon B."/>
            <person name="Gaillardin C."/>
            <person name="Johnston M."/>
            <person name="Baret P.V."/>
            <person name="Cliften P."/>
            <person name="Sherman D.J."/>
            <person name="Weissenbach J."/>
            <person name="Westhof E."/>
            <person name="Wincker P."/>
            <person name="Jubin C."/>
            <person name="Poulain J."/>
            <person name="Barbe V."/>
            <person name="Segurens B."/>
            <person name="Artiguenave F."/>
            <person name="Anthouard V."/>
            <person name="Vacherie B."/>
            <person name="Val M.-E."/>
            <person name="Fulton R.S."/>
            <person name="Minx P."/>
            <person name="Wilson R."/>
            <person name="Durrens P."/>
            <person name="Jean G."/>
            <person name="Marck C."/>
            <person name="Martin T."/>
            <person name="Nikolski M."/>
            <person name="Rolland T."/>
            <person name="Seret M.-L."/>
            <person name="Casaregola S."/>
            <person name="Despons L."/>
            <person name="Fairhead C."/>
            <person name="Fischer G."/>
            <person name="Lafontaine I."/>
            <person name="Leh V."/>
            <person name="Lemaire M."/>
            <person name="de Montigny J."/>
            <person name="Neuveglise C."/>
            <person name="Thierry A."/>
            <person name="Blanc-Lenfle I."/>
            <person name="Bleykasten C."/>
            <person name="Diffels J."/>
            <person name="Fritsch E."/>
            <person name="Frangeul L."/>
            <person name="Goeffon A."/>
            <person name="Jauniaux N."/>
            <person name="Kachouri-Lafond R."/>
            <person name="Payen C."/>
            <person name="Potier S."/>
            <person name="Pribylova L."/>
            <person name="Ozanne C."/>
            <person name="Richard G.-F."/>
            <person name="Sacerdot C."/>
            <person name="Straub M.-L."/>
            <person name="Talla E."/>
        </authorList>
    </citation>
    <scope>NUCLEOTIDE SEQUENCE [LARGE SCALE GENOMIC DNA]</scope>
    <source>
        <strain>ATCC 2623 / CBS 732 / BCRC 21506 / NBRC 1130 / NCYC 568 / NRRL Y-229</strain>
    </source>
</reference>
<sequence length="722" mass="79420">MIIRAPTRTMTKSFNGRQMGFKFPSVENMPQNPLDEYHMNNHHLLNDNIAKSQQAQAHPHPPPHQKPISTDEDALSNINSDYTSGSNTNTNSGNSSNGYYSFANISDNTTPLPNKMYSYPSSPKSNESSEGGKMSELTVPKDEHNQSSQKSTEPMEVIPEDNGFTSMSLNVQSIPTADNFSFDIASSNSLRPGSTTDKPGVATLARTPSSNTSRSSLLSPSVRNPSSSSARIRQSKRRSQLKRSPSIRCKGGLLKYFHLLGSRIKKTLRKIKLALRGKNSKRQASYRRSTSSTAAPKVARKPQVNVTRASSKKELTSHLKRTNGYVSNLKRSMSQRSLRPLLETPEKCATAGSLHTPHPDTSSSDAFVTPPGSRIVRNPTTSLRRTPSSIRRAASVIRTPIPAVPSATVAPSESFVYEDATTASPGSANGSENRSGLVRSTASKSLNSLVRQRSIVVKNKVIPLSMHQYSIKEEDEDKEHDSQFMIRPSSDYSLSPVHSVSSEGNGSNYDSDFEKYYSTGDYTDAYEDAEMGSFISSKRTSSTNTSSTAASSDAVSYTESVVPSVEPTVEPAVESKSIDDGEDIDETTDSVSFNNEIEELRSNINHYFRCVIARRIKLRLQFSHYESSNSLSPSYLDIMESLLKDYDDESTAGKDPAEFNTIDEEDEVAASELWSPRDSKTGSIRVNVQTPYLKRGPTQHSLISLNSRDVRRSLTLPIGMKV</sequence>
<gene>
    <name type="primary">AIM44</name>
    <name type="ordered locus">ZYRO0F07458g</name>
</gene>
<accession>C5DXS6</accession>
<keyword id="KW-1185">Reference proteome</keyword>
<feature type="chain" id="PRO_0000408704" description="Altered inheritance of mitochondria protein 44">
    <location>
        <begin position="1"/>
        <end position="722"/>
    </location>
</feature>
<feature type="region of interest" description="Disordered" evidence="2">
    <location>
        <begin position="52"/>
        <end position="94"/>
    </location>
</feature>
<feature type="region of interest" description="Disordered" evidence="2">
    <location>
        <begin position="110"/>
        <end position="161"/>
    </location>
</feature>
<feature type="region of interest" description="Disordered" evidence="2">
    <location>
        <begin position="187"/>
        <end position="245"/>
    </location>
</feature>
<feature type="region of interest" description="Disordered" evidence="2">
    <location>
        <begin position="275"/>
        <end position="325"/>
    </location>
</feature>
<feature type="region of interest" description="Disordered" evidence="2">
    <location>
        <begin position="349"/>
        <end position="389"/>
    </location>
</feature>
<feature type="region of interest" description="Disordered" evidence="2">
    <location>
        <begin position="488"/>
        <end position="511"/>
    </location>
</feature>
<feature type="region of interest" description="Disordered" evidence="2">
    <location>
        <begin position="558"/>
        <end position="588"/>
    </location>
</feature>
<feature type="compositionally biased region" description="Low complexity" evidence="2">
    <location>
        <begin position="79"/>
        <end position="94"/>
    </location>
</feature>
<feature type="compositionally biased region" description="Low complexity" evidence="2">
    <location>
        <begin position="117"/>
        <end position="132"/>
    </location>
</feature>
<feature type="compositionally biased region" description="Polar residues" evidence="2">
    <location>
        <begin position="187"/>
        <end position="197"/>
    </location>
</feature>
<feature type="compositionally biased region" description="Low complexity" evidence="2">
    <location>
        <begin position="206"/>
        <end position="229"/>
    </location>
</feature>
<feature type="compositionally biased region" description="Basic residues" evidence="2">
    <location>
        <begin position="275"/>
        <end position="285"/>
    </location>
</feature>
<feature type="compositionally biased region" description="Low complexity" evidence="2">
    <location>
        <begin position="286"/>
        <end position="295"/>
    </location>
</feature>
<feature type="compositionally biased region" description="Polar residues" evidence="2">
    <location>
        <begin position="378"/>
        <end position="389"/>
    </location>
</feature>
<feature type="compositionally biased region" description="Polar residues" evidence="2">
    <location>
        <begin position="490"/>
        <end position="510"/>
    </location>
</feature>
<feature type="compositionally biased region" description="Low complexity" evidence="2">
    <location>
        <begin position="558"/>
        <end position="575"/>
    </location>
</feature>
<proteinExistence type="inferred from homology"/>
<dbReference type="EMBL" id="CU928178">
    <property type="protein sequence ID" value="CAR28587.1"/>
    <property type="molecule type" value="Genomic_DNA"/>
</dbReference>
<dbReference type="RefSeq" id="XP_002497520.1">
    <property type="nucleotide sequence ID" value="XM_002497475.1"/>
</dbReference>
<dbReference type="SMR" id="C5DXS6"/>
<dbReference type="FunCoup" id="C5DXS6">
    <property type="interactions" value="41"/>
</dbReference>
<dbReference type="STRING" id="559307.C5DXS6"/>
<dbReference type="GeneID" id="8205282"/>
<dbReference type="KEGG" id="zro:ZYRO0F07458g"/>
<dbReference type="HOGENOM" id="CLU_385965_0_0_1"/>
<dbReference type="InParanoid" id="C5DXS6"/>
<dbReference type="Proteomes" id="UP000008536">
    <property type="component" value="Chromosome F"/>
</dbReference>
<dbReference type="GO" id="GO:0005935">
    <property type="term" value="C:cellular bud neck"/>
    <property type="evidence" value="ECO:0007669"/>
    <property type="project" value="UniProtKB-SubCell"/>
</dbReference>
<name>AIM44_ZYGRC</name>
<protein>
    <recommendedName>
        <fullName>Altered inheritance of mitochondria protein 44</fullName>
    </recommendedName>
</protein>
<evidence type="ECO:0000250" key="1"/>
<evidence type="ECO:0000256" key="2">
    <source>
        <dbReference type="SAM" id="MobiDB-lite"/>
    </source>
</evidence>
<evidence type="ECO:0000305" key="3"/>